<keyword id="KW-0007">Acetylation</keyword>
<keyword id="KW-0067">ATP-binding</keyword>
<keyword id="KW-0963">Cytoplasm</keyword>
<keyword id="KW-0418">Kinase</keyword>
<keyword id="KW-0545">Nucleotide biosynthesis</keyword>
<keyword id="KW-0547">Nucleotide-binding</keyword>
<keyword id="KW-1185">Reference proteome</keyword>
<keyword id="KW-0808">Transferase</keyword>
<protein>
    <recommendedName>
        <fullName evidence="2">Adenylate kinase</fullName>
        <shortName evidence="2">AK</shortName>
        <ecNumber evidence="2">2.7.4.3</ecNumber>
    </recommendedName>
    <alternativeName>
        <fullName evidence="2">ATP-AMP transphosphorylase</fullName>
    </alternativeName>
    <alternativeName>
        <fullName evidence="2">ATP:AMP phosphotransferase</fullName>
    </alternativeName>
    <alternativeName>
        <fullName evidence="2">Adenylate monophosphate kinase</fullName>
    </alternativeName>
</protein>
<comment type="function">
    <text evidence="2">Catalyzes the reversible transfer of the terminal phosphate group between ATP and AMP. Plays an important role in cellular energy homeostasis and in adenine nucleotide metabolism.</text>
</comment>
<comment type="catalytic activity">
    <reaction evidence="2">
        <text>AMP + ATP = 2 ADP</text>
        <dbReference type="Rhea" id="RHEA:12973"/>
        <dbReference type="ChEBI" id="CHEBI:30616"/>
        <dbReference type="ChEBI" id="CHEBI:456215"/>
        <dbReference type="ChEBI" id="CHEBI:456216"/>
        <dbReference type="EC" id="2.7.4.3"/>
    </reaction>
</comment>
<comment type="pathway">
    <text evidence="2">Purine metabolism; AMP biosynthesis via salvage pathway; AMP from ADP: step 1/1.</text>
</comment>
<comment type="subunit">
    <text evidence="2">Monomer.</text>
</comment>
<comment type="subcellular location">
    <subcellularLocation>
        <location evidence="2">Cytoplasm</location>
    </subcellularLocation>
</comment>
<comment type="domain">
    <text evidence="2">Consists of three domains, a large central CORE domain and two small peripheral domains, NMPbind and LID, which undergo movements during catalysis. The LID domain closes over the site of phosphoryl transfer upon ATP binding. Assembling and dissambling the active center during each catalytic cycle provides an effective means to prevent ATP hydrolysis.</text>
</comment>
<comment type="similarity">
    <text evidence="2">Belongs to the adenylate kinase family.</text>
</comment>
<accession>B7MDZ6</accession>
<organism>
    <name type="scientific">Escherichia coli O45:K1 (strain S88 / ExPEC)</name>
    <dbReference type="NCBI Taxonomy" id="585035"/>
    <lineage>
        <taxon>Bacteria</taxon>
        <taxon>Pseudomonadati</taxon>
        <taxon>Pseudomonadota</taxon>
        <taxon>Gammaproteobacteria</taxon>
        <taxon>Enterobacterales</taxon>
        <taxon>Enterobacteriaceae</taxon>
        <taxon>Escherichia</taxon>
    </lineage>
</organism>
<name>KAD_ECO45</name>
<feature type="chain" id="PRO_1000191145" description="Adenylate kinase">
    <location>
        <begin position="1"/>
        <end position="214"/>
    </location>
</feature>
<feature type="region of interest" description="NMP" evidence="2">
    <location>
        <begin position="30"/>
        <end position="59"/>
    </location>
</feature>
<feature type="region of interest" description="LID">
    <location>
        <begin position="122"/>
        <end position="159"/>
    </location>
</feature>
<feature type="binding site" evidence="2">
    <location>
        <begin position="10"/>
        <end position="15"/>
    </location>
    <ligand>
        <name>ATP</name>
        <dbReference type="ChEBI" id="CHEBI:30616"/>
    </ligand>
</feature>
<feature type="binding site" evidence="2">
    <location>
        <position position="31"/>
    </location>
    <ligand>
        <name>AMP</name>
        <dbReference type="ChEBI" id="CHEBI:456215"/>
    </ligand>
</feature>
<feature type="binding site" evidence="2">
    <location>
        <position position="36"/>
    </location>
    <ligand>
        <name>AMP</name>
        <dbReference type="ChEBI" id="CHEBI:456215"/>
    </ligand>
</feature>
<feature type="binding site" evidence="2">
    <location>
        <begin position="57"/>
        <end position="59"/>
    </location>
    <ligand>
        <name>AMP</name>
        <dbReference type="ChEBI" id="CHEBI:456215"/>
    </ligand>
</feature>
<feature type="binding site" evidence="2">
    <location>
        <begin position="85"/>
        <end position="88"/>
    </location>
    <ligand>
        <name>AMP</name>
        <dbReference type="ChEBI" id="CHEBI:456215"/>
    </ligand>
</feature>
<feature type="binding site" evidence="2">
    <location>
        <position position="92"/>
    </location>
    <ligand>
        <name>AMP</name>
        <dbReference type="ChEBI" id="CHEBI:456215"/>
    </ligand>
</feature>
<feature type="binding site" evidence="2">
    <location>
        <position position="123"/>
    </location>
    <ligand>
        <name>ATP</name>
        <dbReference type="ChEBI" id="CHEBI:30616"/>
    </ligand>
</feature>
<feature type="binding site" evidence="2">
    <location>
        <begin position="132"/>
        <end position="133"/>
    </location>
    <ligand>
        <name>ATP</name>
        <dbReference type="ChEBI" id="CHEBI:30616"/>
    </ligand>
</feature>
<feature type="binding site" evidence="2">
    <location>
        <position position="156"/>
    </location>
    <ligand>
        <name>AMP</name>
        <dbReference type="ChEBI" id="CHEBI:456215"/>
    </ligand>
</feature>
<feature type="binding site" evidence="2">
    <location>
        <position position="167"/>
    </location>
    <ligand>
        <name>AMP</name>
        <dbReference type="ChEBI" id="CHEBI:456215"/>
    </ligand>
</feature>
<feature type="binding site" evidence="2">
    <location>
        <position position="200"/>
    </location>
    <ligand>
        <name>ATP</name>
        <dbReference type="ChEBI" id="CHEBI:30616"/>
    </ligand>
</feature>
<feature type="modified residue" description="N6-acetyllysine" evidence="1">
    <location>
        <position position="192"/>
    </location>
</feature>
<evidence type="ECO:0000250" key="1"/>
<evidence type="ECO:0000255" key="2">
    <source>
        <dbReference type="HAMAP-Rule" id="MF_00235"/>
    </source>
</evidence>
<reference key="1">
    <citation type="journal article" date="2009" name="PLoS Genet.">
        <title>Organised genome dynamics in the Escherichia coli species results in highly diverse adaptive paths.</title>
        <authorList>
            <person name="Touchon M."/>
            <person name="Hoede C."/>
            <person name="Tenaillon O."/>
            <person name="Barbe V."/>
            <person name="Baeriswyl S."/>
            <person name="Bidet P."/>
            <person name="Bingen E."/>
            <person name="Bonacorsi S."/>
            <person name="Bouchier C."/>
            <person name="Bouvet O."/>
            <person name="Calteau A."/>
            <person name="Chiapello H."/>
            <person name="Clermont O."/>
            <person name="Cruveiller S."/>
            <person name="Danchin A."/>
            <person name="Diard M."/>
            <person name="Dossat C."/>
            <person name="Karoui M.E."/>
            <person name="Frapy E."/>
            <person name="Garry L."/>
            <person name="Ghigo J.M."/>
            <person name="Gilles A.M."/>
            <person name="Johnson J."/>
            <person name="Le Bouguenec C."/>
            <person name="Lescat M."/>
            <person name="Mangenot S."/>
            <person name="Martinez-Jehanne V."/>
            <person name="Matic I."/>
            <person name="Nassif X."/>
            <person name="Oztas S."/>
            <person name="Petit M.A."/>
            <person name="Pichon C."/>
            <person name="Rouy Z."/>
            <person name="Ruf C.S."/>
            <person name="Schneider D."/>
            <person name="Tourret J."/>
            <person name="Vacherie B."/>
            <person name="Vallenet D."/>
            <person name="Medigue C."/>
            <person name="Rocha E.P.C."/>
            <person name="Denamur E."/>
        </authorList>
    </citation>
    <scope>NUCLEOTIDE SEQUENCE [LARGE SCALE GENOMIC DNA]</scope>
    <source>
        <strain>S88 / ExPEC</strain>
    </source>
</reference>
<sequence>MRIILLGAPGAGKGTQAQFIMEKYGIPQISTGDMLRAAVKSGSELGKQAKDIMDAGKLVTDELVIALVKERIAQEDCRYGFLLDGFPRTIPQADAMKEAGINVDYVLEFDVPDELIVDRIVGRRVHAPSGRVYHVKFNPPKVEGKDDVTGEELTTRKDDQEETVRKRLVEYHQMTAPLIGYYSKEAEAGNTKYAKVDGTKPVAEVRAALEKILG</sequence>
<dbReference type="EC" id="2.7.4.3" evidence="2"/>
<dbReference type="EMBL" id="CU928161">
    <property type="protein sequence ID" value="CAR01818.1"/>
    <property type="molecule type" value="Genomic_DNA"/>
</dbReference>
<dbReference type="RefSeq" id="WP_001331495.1">
    <property type="nucleotide sequence ID" value="NC_011742.1"/>
</dbReference>
<dbReference type="SMR" id="B7MDZ6"/>
<dbReference type="KEGG" id="ecz:ECS88_0471"/>
<dbReference type="HOGENOM" id="CLU_032354_1_2_6"/>
<dbReference type="UniPathway" id="UPA00588">
    <property type="reaction ID" value="UER00649"/>
</dbReference>
<dbReference type="Proteomes" id="UP000000747">
    <property type="component" value="Chromosome"/>
</dbReference>
<dbReference type="GO" id="GO:0005737">
    <property type="term" value="C:cytoplasm"/>
    <property type="evidence" value="ECO:0007669"/>
    <property type="project" value="UniProtKB-SubCell"/>
</dbReference>
<dbReference type="GO" id="GO:0004017">
    <property type="term" value="F:adenylate kinase activity"/>
    <property type="evidence" value="ECO:0007669"/>
    <property type="project" value="UniProtKB-UniRule"/>
</dbReference>
<dbReference type="GO" id="GO:0005524">
    <property type="term" value="F:ATP binding"/>
    <property type="evidence" value="ECO:0007669"/>
    <property type="project" value="UniProtKB-UniRule"/>
</dbReference>
<dbReference type="GO" id="GO:0044209">
    <property type="term" value="P:AMP salvage"/>
    <property type="evidence" value="ECO:0007669"/>
    <property type="project" value="UniProtKB-UniRule"/>
</dbReference>
<dbReference type="CDD" id="cd01428">
    <property type="entry name" value="ADK"/>
    <property type="match status" value="1"/>
</dbReference>
<dbReference type="FunFam" id="3.40.50.300:FF:000106">
    <property type="entry name" value="Adenylate kinase mitochondrial"/>
    <property type="match status" value="1"/>
</dbReference>
<dbReference type="Gene3D" id="3.40.50.300">
    <property type="entry name" value="P-loop containing nucleotide triphosphate hydrolases"/>
    <property type="match status" value="1"/>
</dbReference>
<dbReference type="HAMAP" id="MF_00235">
    <property type="entry name" value="Adenylate_kinase_Adk"/>
    <property type="match status" value="1"/>
</dbReference>
<dbReference type="InterPro" id="IPR006259">
    <property type="entry name" value="Adenyl_kin_sub"/>
</dbReference>
<dbReference type="InterPro" id="IPR000850">
    <property type="entry name" value="Adenylat/UMP-CMP_kin"/>
</dbReference>
<dbReference type="InterPro" id="IPR033690">
    <property type="entry name" value="Adenylat_kinase_CS"/>
</dbReference>
<dbReference type="InterPro" id="IPR007862">
    <property type="entry name" value="Adenylate_kinase_lid-dom"/>
</dbReference>
<dbReference type="InterPro" id="IPR027417">
    <property type="entry name" value="P-loop_NTPase"/>
</dbReference>
<dbReference type="NCBIfam" id="TIGR01351">
    <property type="entry name" value="adk"/>
    <property type="match status" value="1"/>
</dbReference>
<dbReference type="NCBIfam" id="NF001379">
    <property type="entry name" value="PRK00279.1-1"/>
    <property type="match status" value="1"/>
</dbReference>
<dbReference type="NCBIfam" id="NF001380">
    <property type="entry name" value="PRK00279.1-2"/>
    <property type="match status" value="1"/>
</dbReference>
<dbReference type="NCBIfam" id="NF001381">
    <property type="entry name" value="PRK00279.1-3"/>
    <property type="match status" value="1"/>
</dbReference>
<dbReference type="NCBIfam" id="NF011100">
    <property type="entry name" value="PRK14527.1"/>
    <property type="match status" value="1"/>
</dbReference>
<dbReference type="PANTHER" id="PTHR23359">
    <property type="entry name" value="NUCLEOTIDE KINASE"/>
    <property type="match status" value="1"/>
</dbReference>
<dbReference type="Pfam" id="PF00406">
    <property type="entry name" value="ADK"/>
    <property type="match status" value="1"/>
</dbReference>
<dbReference type="Pfam" id="PF05191">
    <property type="entry name" value="ADK_lid"/>
    <property type="match status" value="1"/>
</dbReference>
<dbReference type="PRINTS" id="PR00094">
    <property type="entry name" value="ADENYLTKNASE"/>
</dbReference>
<dbReference type="SUPFAM" id="SSF52540">
    <property type="entry name" value="P-loop containing nucleoside triphosphate hydrolases"/>
    <property type="match status" value="1"/>
</dbReference>
<dbReference type="PROSITE" id="PS00113">
    <property type="entry name" value="ADENYLATE_KINASE"/>
    <property type="match status" value="1"/>
</dbReference>
<proteinExistence type="inferred from homology"/>
<gene>
    <name evidence="2" type="primary">adk</name>
    <name type="ordered locus">ECS88_0471</name>
</gene>